<evidence type="ECO:0000255" key="1">
    <source>
        <dbReference type="PROSITE-ProRule" id="PRU00303"/>
    </source>
</evidence>
<evidence type="ECO:0000305" key="2"/>
<name>17KD_RICPR</name>
<sequence length="159" mass="16672">MKLLSKIMIIALAASMLQACNGQSGMNKQGTGTLLGGAGGALLGSQFGQGKGQLVGVGVGALLGAVLGGQIGASMDEQDRRLLELTSQRALESAPSGSNIEWRNPDNGNHGYVTPNKTYRNSAGQYCREYTQTVIIGGKQQKTYGNACRQPDGQWQVVN</sequence>
<gene>
    <name type="primary">omp</name>
    <name type="ordered locus">RP833</name>
</gene>
<keyword id="KW-0998">Cell outer membrane</keyword>
<keyword id="KW-0449">Lipoprotein</keyword>
<keyword id="KW-0472">Membrane</keyword>
<keyword id="KW-0564">Palmitate</keyword>
<keyword id="KW-1185">Reference proteome</keyword>
<keyword id="KW-0732">Signal</keyword>
<protein>
    <recommendedName>
        <fullName>17 kDa surface antigen</fullName>
    </recommendedName>
</protein>
<accession>P16624</accession>
<organism>
    <name type="scientific">Rickettsia prowazekii (strain Madrid E)</name>
    <dbReference type="NCBI Taxonomy" id="272947"/>
    <lineage>
        <taxon>Bacteria</taxon>
        <taxon>Pseudomonadati</taxon>
        <taxon>Pseudomonadota</taxon>
        <taxon>Alphaproteobacteria</taxon>
        <taxon>Rickettsiales</taxon>
        <taxon>Rickettsiaceae</taxon>
        <taxon>Rickettsieae</taxon>
        <taxon>Rickettsia</taxon>
        <taxon>typhus group</taxon>
    </lineage>
</organism>
<proteinExistence type="inferred from homology"/>
<feature type="signal peptide" evidence="1">
    <location>
        <begin position="1"/>
        <end position="19"/>
    </location>
</feature>
<feature type="chain" id="PRO_0000018019" description="17 kDa surface antigen">
    <location>
        <begin position="20"/>
        <end position="159"/>
    </location>
</feature>
<feature type="lipid moiety-binding region" description="N-palmitoyl cysteine" evidence="2">
    <location>
        <position position="20"/>
    </location>
</feature>
<feature type="lipid moiety-binding region" description="S-diacylglycerol cysteine" evidence="2">
    <location>
        <position position="20"/>
    </location>
</feature>
<reference key="1">
    <citation type="journal article" date="1989" name="J. Bacteriol.">
        <title>Comparative sequence analysis of a genus-common rickettsial antigen gene.</title>
        <authorList>
            <person name="Anderson B.E."/>
            <person name="Tzianabos T."/>
        </authorList>
    </citation>
    <scope>NUCLEOTIDE SEQUENCE [GENOMIC DNA]</scope>
    <source>
        <strain>Madrid E</strain>
    </source>
</reference>
<reference key="2">
    <citation type="journal article" date="1998" name="Nature">
        <title>The genome sequence of Rickettsia prowazekii and the origin of mitochondria.</title>
        <authorList>
            <person name="Andersson S.G.E."/>
            <person name="Zomorodipour A."/>
            <person name="Andersson J.O."/>
            <person name="Sicheritz-Ponten T."/>
            <person name="Alsmark U.C.M."/>
            <person name="Podowski R.M."/>
            <person name="Naeslund A.K."/>
            <person name="Eriksson A.-S."/>
            <person name="Winkler H.H."/>
            <person name="Kurland C.G."/>
        </authorList>
    </citation>
    <scope>NUCLEOTIDE SEQUENCE [LARGE SCALE GENOMIC DNA]</scope>
    <source>
        <strain>Madrid E</strain>
    </source>
</reference>
<dbReference type="EMBL" id="M28482">
    <property type="protein sequence ID" value="AAA26378.1"/>
    <property type="status" value="ALT_SEQ"/>
    <property type="molecule type" value="Genomic_DNA"/>
</dbReference>
<dbReference type="EMBL" id="AJ235273">
    <property type="protein sequence ID" value="CAA15258.1"/>
    <property type="molecule type" value="Genomic_DNA"/>
</dbReference>
<dbReference type="PIR" id="D33971">
    <property type="entry name" value="D33971"/>
</dbReference>
<dbReference type="RefSeq" id="NP_221182.1">
    <property type="nucleotide sequence ID" value="NC_000963.1"/>
</dbReference>
<dbReference type="RefSeq" id="WP_004596824.1">
    <property type="nucleotide sequence ID" value="NC_000963.1"/>
</dbReference>
<dbReference type="STRING" id="272947.gene:17555902"/>
<dbReference type="EnsemblBacteria" id="CAA15258">
    <property type="protein sequence ID" value="CAA15258"/>
    <property type="gene ID" value="CAA15258"/>
</dbReference>
<dbReference type="KEGG" id="rpr:RP833"/>
<dbReference type="PATRIC" id="fig|272947.5.peg.870"/>
<dbReference type="eggNOG" id="COG4520">
    <property type="taxonomic scope" value="Bacteria"/>
</dbReference>
<dbReference type="HOGENOM" id="CLU_118535_0_0_5"/>
<dbReference type="OrthoDB" id="5402098at2"/>
<dbReference type="Proteomes" id="UP000002480">
    <property type="component" value="Chromosome"/>
</dbReference>
<dbReference type="GO" id="GO:0009279">
    <property type="term" value="C:cell outer membrane"/>
    <property type="evidence" value="ECO:0007669"/>
    <property type="project" value="UniProtKB-SubCell"/>
</dbReference>
<dbReference type="InterPro" id="IPR032635">
    <property type="entry name" value="Anti_2"/>
</dbReference>
<dbReference type="InterPro" id="IPR008816">
    <property type="entry name" value="Gly_zipper_2TM_dom"/>
</dbReference>
<dbReference type="InterPro" id="IPR016364">
    <property type="entry name" value="Surface_antigen_Rickettsia"/>
</dbReference>
<dbReference type="Pfam" id="PF16998">
    <property type="entry name" value="17kDa_Anti_2"/>
    <property type="match status" value="1"/>
</dbReference>
<dbReference type="Pfam" id="PF05433">
    <property type="entry name" value="Rick_17kDa_Anti"/>
    <property type="match status" value="1"/>
</dbReference>
<dbReference type="PIRSF" id="PIRSF002721">
    <property type="entry name" value="Surface_antigen_Rickettsia"/>
    <property type="match status" value="1"/>
</dbReference>
<dbReference type="PROSITE" id="PS51257">
    <property type="entry name" value="PROKAR_LIPOPROTEIN"/>
    <property type="match status" value="1"/>
</dbReference>
<comment type="subcellular location">
    <subcellularLocation>
        <location evidence="2">Cell outer membrane</location>
        <topology evidence="2">Lipid-anchor</topology>
    </subcellularLocation>
</comment>
<comment type="similarity">
    <text evidence="2">Belongs to the rickettsiale 17 kDa surface antigen family.</text>
</comment>